<name>SODL_CWPXB</name>
<keyword id="KW-1015">Disulfide bond</keyword>
<keyword id="KW-1035">Host cytoplasm</keyword>
<keyword id="KW-0946">Virion</keyword>
<gene>
    <name type="primary">OPG175</name>
    <name type="ordered locus">CPXV183</name>
    <name type="ORF">A45R</name>
</gene>
<organism>
    <name type="scientific">Cowpox virus (strain Brighton Red)</name>
    <name type="common">CPV</name>
    <dbReference type="NCBI Taxonomy" id="265872"/>
    <lineage>
        <taxon>Viruses</taxon>
        <taxon>Varidnaviria</taxon>
        <taxon>Bamfordvirae</taxon>
        <taxon>Nucleocytoviricota</taxon>
        <taxon>Pokkesviricetes</taxon>
        <taxon>Chitovirales</taxon>
        <taxon>Poxviridae</taxon>
        <taxon>Chordopoxvirinae</taxon>
        <taxon>Orthopoxvirus</taxon>
        <taxon>Cowpox virus</taxon>
    </lineage>
</organism>
<comment type="function">
    <text evidence="2">Superoxide dismutase-like protein with no enzymatic activity.</text>
</comment>
<comment type="subcellular location">
    <subcellularLocation>
        <location evidence="2">Virion</location>
    </subcellularLocation>
    <subcellularLocation>
        <location evidence="2">Host cytoplasm</location>
    </subcellularLocation>
    <text evidence="2">Accumulates predominantly in cytoplasmic viral factories.</text>
</comment>
<comment type="similarity">
    <text evidence="3">Belongs to the Cu-Zn superoxide dismutase family.</text>
</comment>
<protein>
    <recommendedName>
        <fullName>Cu-Zn superoxide dismutase-like protein OPG175</fullName>
    </recommendedName>
</protein>
<reference key="1">
    <citation type="journal article" date="2001" name="J. Virol.">
        <title>The vaccinia virus superoxide dismutase-like protein (A45R) is a virion component that is nonessential for virus replication.</title>
        <authorList>
            <person name="Almazan F."/>
            <person name="Tscharke D.C."/>
            <person name="Smith G.L."/>
        </authorList>
    </citation>
    <scope>NUCLEOTIDE SEQUENCE [GENOMIC DNA]</scope>
</reference>
<reference key="2">
    <citation type="submission" date="2003-05" db="EMBL/GenBank/DDBJ databases">
        <authorList>
            <person name="Dietrich F.S."/>
            <person name="Ray C.A."/>
            <person name="Sharma A.D."/>
            <person name="Allen A."/>
            <person name="Pickup D.J."/>
        </authorList>
    </citation>
    <scope>NUCLEOTIDE SEQUENCE [LARGE SCALE GENOMIC DNA]</scope>
</reference>
<feature type="chain" id="PRO_0000164173" description="Cu-Zn superoxide dismutase-like protein OPG175">
    <location>
        <begin position="1"/>
        <end position="125"/>
    </location>
</feature>
<feature type="disulfide bond" evidence="1">
    <location>
        <begin position="52"/>
        <end position="102"/>
    </location>
</feature>
<proteinExistence type="inferred from homology"/>
<sequence>MAVCIIDHGNIRGVIYFEPVHGKDKVLGSVIGLKSGTYSLIIHRYGDISRGCESIGSPEIFIGNIFVNRYGVAYVYLDTDVNISTIIGKALSISKNDQRLACGVIGISFINEKIIHFLTINENGV</sequence>
<dbReference type="EMBL" id="AF349015">
    <property type="protein sequence ID" value="AAK76416.1"/>
    <property type="molecule type" value="Genomic_DNA"/>
</dbReference>
<dbReference type="EMBL" id="AF482758">
    <property type="protein sequence ID" value="AAM13623.1"/>
    <property type="molecule type" value="Genomic_DNA"/>
</dbReference>
<dbReference type="SMR" id="Q91M93"/>
<dbReference type="KEGG" id="vg:1486062"/>
<dbReference type="Proteomes" id="UP000152733">
    <property type="component" value="Segment"/>
</dbReference>
<dbReference type="GO" id="GO:0030430">
    <property type="term" value="C:host cell cytoplasm"/>
    <property type="evidence" value="ECO:0007669"/>
    <property type="project" value="UniProtKB-SubCell"/>
</dbReference>
<dbReference type="GO" id="GO:0044423">
    <property type="term" value="C:virion component"/>
    <property type="evidence" value="ECO:0007669"/>
    <property type="project" value="UniProtKB-KW"/>
</dbReference>
<dbReference type="GO" id="GO:0046872">
    <property type="term" value="F:metal ion binding"/>
    <property type="evidence" value="ECO:0007669"/>
    <property type="project" value="InterPro"/>
</dbReference>
<dbReference type="GO" id="GO:0006801">
    <property type="term" value="P:superoxide metabolic process"/>
    <property type="evidence" value="ECO:0007669"/>
    <property type="project" value="InterPro"/>
</dbReference>
<dbReference type="Gene3D" id="2.60.40.200">
    <property type="entry name" value="Superoxide dismutase, copper/zinc binding domain"/>
    <property type="match status" value="1"/>
</dbReference>
<dbReference type="InterPro" id="IPR036423">
    <property type="entry name" value="SOD-like_Cu/Zn_dom_sf"/>
</dbReference>
<dbReference type="SUPFAM" id="SSF49329">
    <property type="entry name" value="Cu,Zn superoxide dismutase-like"/>
    <property type="match status" value="1"/>
</dbReference>
<organismHost>
    <name type="scientific">Bos taurus</name>
    <name type="common">Bovine</name>
    <dbReference type="NCBI Taxonomy" id="9913"/>
</organismHost>
<organismHost>
    <name type="scientific">Felis catus</name>
    <name type="common">Cat</name>
    <name type="synonym">Felis silvestris catus</name>
    <dbReference type="NCBI Taxonomy" id="9685"/>
</organismHost>
<organismHost>
    <name type="scientific">Homo sapiens</name>
    <name type="common">Human</name>
    <dbReference type="NCBI Taxonomy" id="9606"/>
</organismHost>
<organismHost>
    <name type="scientific">Loxodonta africana</name>
    <name type="common">African elephant</name>
    <dbReference type="NCBI Taxonomy" id="9785"/>
</organismHost>
<organismHost>
    <name type="scientific">Microtus agrestis</name>
    <name type="common">Short-tailed field vole</name>
    <dbReference type="NCBI Taxonomy" id="29092"/>
</organismHost>
<organismHost>
    <name type="scientific">Mus musculus</name>
    <name type="common">Mouse</name>
    <dbReference type="NCBI Taxonomy" id="10090"/>
</organismHost>
<organismHost>
    <name type="scientific">Myodes glareolus</name>
    <name type="common">Bank vole</name>
    <name type="synonym">Clethrionomys glareolus</name>
    <dbReference type="NCBI Taxonomy" id="447135"/>
</organismHost>
<accession>Q91M93</accession>
<evidence type="ECO:0000250" key="1"/>
<evidence type="ECO:0000250" key="2">
    <source>
        <dbReference type="UniProtKB" id="P26669"/>
    </source>
</evidence>
<evidence type="ECO:0000305" key="3"/>